<reference key="1">
    <citation type="journal article" date="2006" name="Proc. Natl. Acad. Sci. U.S.A.">
        <title>Molecular genetic anatomy of inter- and intraserotype variation in the human bacterial pathogen group A Streptococcus.</title>
        <authorList>
            <person name="Beres S.B."/>
            <person name="Richter E.W."/>
            <person name="Nagiec M.J."/>
            <person name="Sumby P."/>
            <person name="Porcella S.F."/>
            <person name="DeLeo F.R."/>
            <person name="Musser J.M."/>
        </authorList>
    </citation>
    <scope>NUCLEOTIDE SEQUENCE [LARGE SCALE GENOMIC DNA]</scope>
    <source>
        <strain>MGAS10750</strain>
    </source>
</reference>
<name>GPMA_STRPF</name>
<accession>Q1J5W1</accession>
<feature type="chain" id="PRO_1000064108" description="2,3-bisphosphoglycerate-dependent phosphoglycerate mutase">
    <location>
        <begin position="1"/>
        <end position="231"/>
    </location>
</feature>
<feature type="active site" description="Tele-phosphohistidine intermediate" evidence="1">
    <location>
        <position position="9"/>
    </location>
</feature>
<feature type="active site" description="Proton donor/acceptor" evidence="1">
    <location>
        <position position="87"/>
    </location>
</feature>
<feature type="binding site" evidence="1">
    <location>
        <begin position="8"/>
        <end position="15"/>
    </location>
    <ligand>
        <name>substrate</name>
    </ligand>
</feature>
<feature type="binding site" evidence="1">
    <location>
        <begin position="21"/>
        <end position="22"/>
    </location>
    <ligand>
        <name>substrate</name>
    </ligand>
</feature>
<feature type="binding site" evidence="1">
    <location>
        <position position="60"/>
    </location>
    <ligand>
        <name>substrate</name>
    </ligand>
</feature>
<feature type="binding site" evidence="1">
    <location>
        <begin position="87"/>
        <end position="90"/>
    </location>
    <ligand>
        <name>substrate</name>
    </ligand>
</feature>
<feature type="binding site" evidence="1">
    <location>
        <position position="98"/>
    </location>
    <ligand>
        <name>substrate</name>
    </ligand>
</feature>
<feature type="binding site" evidence="1">
    <location>
        <begin position="114"/>
        <end position="115"/>
    </location>
    <ligand>
        <name>substrate</name>
    </ligand>
</feature>
<feature type="binding site" evidence="1">
    <location>
        <begin position="183"/>
        <end position="184"/>
    </location>
    <ligand>
        <name>substrate</name>
    </ligand>
</feature>
<feature type="site" description="Transition state stabilizer" evidence="1">
    <location>
        <position position="182"/>
    </location>
</feature>
<dbReference type="EC" id="5.4.2.11" evidence="1"/>
<dbReference type="EMBL" id="CP000262">
    <property type="protein sequence ID" value="ABF38222.1"/>
    <property type="molecule type" value="Genomic_DNA"/>
</dbReference>
<dbReference type="SMR" id="Q1J5W1"/>
<dbReference type="KEGG" id="spi:MGAS10750_Spy1272"/>
<dbReference type="HOGENOM" id="CLU_033323_1_5_9"/>
<dbReference type="UniPathway" id="UPA00109">
    <property type="reaction ID" value="UER00186"/>
</dbReference>
<dbReference type="Proteomes" id="UP000002434">
    <property type="component" value="Chromosome"/>
</dbReference>
<dbReference type="GO" id="GO:0004619">
    <property type="term" value="F:phosphoglycerate mutase activity"/>
    <property type="evidence" value="ECO:0007669"/>
    <property type="project" value="UniProtKB-EC"/>
</dbReference>
<dbReference type="GO" id="GO:0006094">
    <property type="term" value="P:gluconeogenesis"/>
    <property type="evidence" value="ECO:0007669"/>
    <property type="project" value="UniProtKB-UniRule"/>
</dbReference>
<dbReference type="GO" id="GO:0006096">
    <property type="term" value="P:glycolytic process"/>
    <property type="evidence" value="ECO:0007669"/>
    <property type="project" value="UniProtKB-UniRule"/>
</dbReference>
<dbReference type="CDD" id="cd07067">
    <property type="entry name" value="HP_PGM_like"/>
    <property type="match status" value="1"/>
</dbReference>
<dbReference type="FunFam" id="3.40.50.1240:FF:000003">
    <property type="entry name" value="2,3-bisphosphoglycerate-dependent phosphoglycerate mutase"/>
    <property type="match status" value="1"/>
</dbReference>
<dbReference type="Gene3D" id="3.40.50.1240">
    <property type="entry name" value="Phosphoglycerate mutase-like"/>
    <property type="match status" value="1"/>
</dbReference>
<dbReference type="HAMAP" id="MF_01039">
    <property type="entry name" value="PGAM_GpmA"/>
    <property type="match status" value="1"/>
</dbReference>
<dbReference type="InterPro" id="IPR013078">
    <property type="entry name" value="His_Pase_superF_clade-1"/>
</dbReference>
<dbReference type="InterPro" id="IPR029033">
    <property type="entry name" value="His_PPase_superfam"/>
</dbReference>
<dbReference type="InterPro" id="IPR005952">
    <property type="entry name" value="Phosphogly_mut1"/>
</dbReference>
<dbReference type="NCBIfam" id="TIGR01258">
    <property type="entry name" value="pgm_1"/>
    <property type="match status" value="1"/>
</dbReference>
<dbReference type="NCBIfam" id="NF010713">
    <property type="entry name" value="PRK14115.1"/>
    <property type="match status" value="1"/>
</dbReference>
<dbReference type="NCBIfam" id="NF010715">
    <property type="entry name" value="PRK14117.1"/>
    <property type="match status" value="1"/>
</dbReference>
<dbReference type="PANTHER" id="PTHR11931">
    <property type="entry name" value="PHOSPHOGLYCERATE MUTASE"/>
    <property type="match status" value="1"/>
</dbReference>
<dbReference type="Pfam" id="PF00300">
    <property type="entry name" value="His_Phos_1"/>
    <property type="match status" value="1"/>
</dbReference>
<dbReference type="PIRSF" id="PIRSF000709">
    <property type="entry name" value="6PFK_2-Ptase"/>
    <property type="match status" value="1"/>
</dbReference>
<dbReference type="SMART" id="SM00855">
    <property type="entry name" value="PGAM"/>
    <property type="match status" value="1"/>
</dbReference>
<dbReference type="SUPFAM" id="SSF53254">
    <property type="entry name" value="Phosphoglycerate mutase-like"/>
    <property type="match status" value="1"/>
</dbReference>
<comment type="function">
    <text evidence="1">Catalyzes the interconversion of 2-phosphoglycerate and 3-phosphoglycerate.</text>
</comment>
<comment type="catalytic activity">
    <reaction evidence="1">
        <text>(2R)-2-phosphoglycerate = (2R)-3-phosphoglycerate</text>
        <dbReference type="Rhea" id="RHEA:15901"/>
        <dbReference type="ChEBI" id="CHEBI:58272"/>
        <dbReference type="ChEBI" id="CHEBI:58289"/>
        <dbReference type="EC" id="5.4.2.11"/>
    </reaction>
</comment>
<comment type="pathway">
    <text evidence="1">Carbohydrate degradation; glycolysis; pyruvate from D-glyceraldehyde 3-phosphate: step 3/5.</text>
</comment>
<comment type="similarity">
    <text evidence="1">Belongs to the phosphoglycerate mutase family. BPG-dependent PGAM subfamily.</text>
</comment>
<organism>
    <name type="scientific">Streptococcus pyogenes serotype M4 (strain MGAS10750)</name>
    <dbReference type="NCBI Taxonomy" id="370554"/>
    <lineage>
        <taxon>Bacteria</taxon>
        <taxon>Bacillati</taxon>
        <taxon>Bacillota</taxon>
        <taxon>Bacilli</taxon>
        <taxon>Lactobacillales</taxon>
        <taxon>Streptococcaceae</taxon>
        <taxon>Streptococcus</taxon>
    </lineage>
</organism>
<keyword id="KW-0312">Gluconeogenesis</keyword>
<keyword id="KW-0324">Glycolysis</keyword>
<keyword id="KW-0413">Isomerase</keyword>
<evidence type="ECO:0000255" key="1">
    <source>
        <dbReference type="HAMAP-Rule" id="MF_01039"/>
    </source>
</evidence>
<protein>
    <recommendedName>
        <fullName evidence="1">2,3-bisphosphoglycerate-dependent phosphoglycerate mutase</fullName>
        <shortName evidence="1">BPG-dependent PGAM</shortName>
        <shortName evidence="1">PGAM</shortName>
        <shortName evidence="1">Phosphoglyceromutase</shortName>
        <shortName evidence="1">dPGM</shortName>
        <ecNumber evidence="1">5.4.2.11</ecNumber>
    </recommendedName>
</protein>
<sequence>MVKLVFARHGESEWNKANLFTGWADVDLSEKGTQQAIDAGKLIKEAGIEFDLAFTSVLTRAIKTTNLALENAGQLWVPTEKSWRLNERHYGALTGKNKAEAAEQFGDEQVHIWRRSYDVLPPAMAKDDEYSAHKDRRYADLDPALIPDAENLKVTLERAMPYWEEKIAPALLDGKNVFVGAHGNSIRALVKHIKGLSDDEIMDVEIPNFPPLVFELDEKLNIVKEYYLGGE</sequence>
<proteinExistence type="inferred from homology"/>
<gene>
    <name evidence="1" type="primary">gpmA</name>
    <name type="ordered locus">MGAS10750_Spy1272</name>
</gene>